<feature type="chain" id="PRO_0000174742" description="Co-chaperonin GroES">
    <location>
        <begin position="1"/>
        <end position="99"/>
    </location>
</feature>
<reference key="1">
    <citation type="journal article" date="2003" name="Genome Res.">
        <title>Comparative complete genome sequence analysis of the amino acid replacements responsible for the thermostability of Corynebacterium efficiens.</title>
        <authorList>
            <person name="Nishio Y."/>
            <person name="Nakamura Y."/>
            <person name="Kawarabayasi Y."/>
            <person name="Usuda Y."/>
            <person name="Kimura E."/>
            <person name="Sugimoto S."/>
            <person name="Matsui K."/>
            <person name="Yamagishi A."/>
            <person name="Kikuchi H."/>
            <person name="Ikeo K."/>
            <person name="Gojobori T."/>
        </authorList>
    </citation>
    <scope>NUCLEOTIDE SEQUENCE [LARGE SCALE GENOMIC DNA]</scope>
    <source>
        <strain>DSM 44549 / YS-314 / AJ 12310 / JCM 11189 / NBRC 100395</strain>
    </source>
</reference>
<gene>
    <name evidence="1" type="primary">groES</name>
    <name evidence="1" type="synonym">groS</name>
    <name type="ordered locus">CE0601</name>
</gene>
<evidence type="ECO:0000255" key="1">
    <source>
        <dbReference type="HAMAP-Rule" id="MF_00580"/>
    </source>
</evidence>
<evidence type="ECO:0000305" key="2"/>
<protein>
    <recommendedName>
        <fullName evidence="1">Co-chaperonin GroES</fullName>
    </recommendedName>
    <alternativeName>
        <fullName evidence="1">10 kDa chaperonin</fullName>
    </alternativeName>
    <alternativeName>
        <fullName evidence="1">Chaperonin-10</fullName>
        <shortName evidence="1">Cpn10</shortName>
    </alternativeName>
</protein>
<proteinExistence type="inferred from homology"/>
<organism>
    <name type="scientific">Corynebacterium efficiens (strain DSM 44549 / YS-314 / AJ 12310 / JCM 11189 / NBRC 100395)</name>
    <dbReference type="NCBI Taxonomy" id="196164"/>
    <lineage>
        <taxon>Bacteria</taxon>
        <taxon>Bacillati</taxon>
        <taxon>Actinomycetota</taxon>
        <taxon>Actinomycetes</taxon>
        <taxon>Mycobacteriales</taxon>
        <taxon>Corynebacteriaceae</taxon>
        <taxon>Corynebacterium</taxon>
    </lineage>
</organism>
<accession>Q8CY28</accession>
<keyword id="KW-0143">Chaperone</keyword>
<keyword id="KW-0963">Cytoplasm</keyword>
<keyword id="KW-1185">Reference proteome</keyword>
<comment type="function">
    <text evidence="1">Together with the chaperonin GroEL, plays an essential role in assisting protein folding. The GroEL-GroES system forms a nano-cage that allows encapsulation of the non-native substrate proteins and provides a physical environment optimized to promote and accelerate protein folding. GroES binds to the apical surface of the GroEL ring, thereby capping the opening of the GroEL channel.</text>
</comment>
<comment type="subunit">
    <text evidence="1">Heptamer of 7 subunits arranged in a ring. Interacts with the chaperonin GroEL.</text>
</comment>
<comment type="subcellular location">
    <subcellularLocation>
        <location evidence="1">Cytoplasm</location>
    </subcellularLocation>
</comment>
<comment type="similarity">
    <text evidence="1">Belongs to the GroES chaperonin family.</text>
</comment>
<comment type="sequence caution" evidence="2">
    <conflict type="erroneous initiation">
        <sequence resource="EMBL-CDS" id="BAC17411"/>
    </conflict>
</comment>
<dbReference type="EMBL" id="BA000035">
    <property type="protein sequence ID" value="BAC17411.1"/>
    <property type="status" value="ALT_INIT"/>
    <property type="molecule type" value="Genomic_DNA"/>
</dbReference>
<dbReference type="RefSeq" id="WP_035109804.1">
    <property type="nucleotide sequence ID" value="NZ_GG700687.1"/>
</dbReference>
<dbReference type="SMR" id="Q8CY28"/>
<dbReference type="STRING" id="196164.gene:10741003"/>
<dbReference type="KEGG" id="cef:CE0601"/>
<dbReference type="eggNOG" id="COG0234">
    <property type="taxonomic scope" value="Bacteria"/>
</dbReference>
<dbReference type="HOGENOM" id="CLU_132825_2_0_11"/>
<dbReference type="OrthoDB" id="9806791at2"/>
<dbReference type="Proteomes" id="UP000001409">
    <property type="component" value="Chromosome"/>
</dbReference>
<dbReference type="GO" id="GO:0005737">
    <property type="term" value="C:cytoplasm"/>
    <property type="evidence" value="ECO:0007669"/>
    <property type="project" value="UniProtKB-SubCell"/>
</dbReference>
<dbReference type="GO" id="GO:0005524">
    <property type="term" value="F:ATP binding"/>
    <property type="evidence" value="ECO:0007669"/>
    <property type="project" value="InterPro"/>
</dbReference>
<dbReference type="GO" id="GO:0046872">
    <property type="term" value="F:metal ion binding"/>
    <property type="evidence" value="ECO:0007669"/>
    <property type="project" value="TreeGrafter"/>
</dbReference>
<dbReference type="GO" id="GO:0044183">
    <property type="term" value="F:protein folding chaperone"/>
    <property type="evidence" value="ECO:0007669"/>
    <property type="project" value="InterPro"/>
</dbReference>
<dbReference type="GO" id="GO:0051087">
    <property type="term" value="F:protein-folding chaperone binding"/>
    <property type="evidence" value="ECO:0007669"/>
    <property type="project" value="TreeGrafter"/>
</dbReference>
<dbReference type="GO" id="GO:0051082">
    <property type="term" value="F:unfolded protein binding"/>
    <property type="evidence" value="ECO:0007669"/>
    <property type="project" value="TreeGrafter"/>
</dbReference>
<dbReference type="GO" id="GO:0051085">
    <property type="term" value="P:chaperone cofactor-dependent protein refolding"/>
    <property type="evidence" value="ECO:0007669"/>
    <property type="project" value="TreeGrafter"/>
</dbReference>
<dbReference type="CDD" id="cd00320">
    <property type="entry name" value="cpn10"/>
    <property type="match status" value="1"/>
</dbReference>
<dbReference type="FunFam" id="2.30.33.40:FF:000001">
    <property type="entry name" value="10 kDa chaperonin"/>
    <property type="match status" value="1"/>
</dbReference>
<dbReference type="Gene3D" id="2.30.33.40">
    <property type="entry name" value="GroES chaperonin"/>
    <property type="match status" value="1"/>
</dbReference>
<dbReference type="HAMAP" id="MF_00580">
    <property type="entry name" value="CH10"/>
    <property type="match status" value="1"/>
</dbReference>
<dbReference type="InterPro" id="IPR020818">
    <property type="entry name" value="Chaperonin_GroES"/>
</dbReference>
<dbReference type="InterPro" id="IPR037124">
    <property type="entry name" value="Chaperonin_GroES_sf"/>
</dbReference>
<dbReference type="InterPro" id="IPR018369">
    <property type="entry name" value="Chaprnonin_Cpn10_CS"/>
</dbReference>
<dbReference type="InterPro" id="IPR011032">
    <property type="entry name" value="GroES-like_sf"/>
</dbReference>
<dbReference type="NCBIfam" id="NF001530">
    <property type="entry name" value="PRK00364.1-6"/>
    <property type="match status" value="1"/>
</dbReference>
<dbReference type="NCBIfam" id="NF001531">
    <property type="entry name" value="PRK00364.2-2"/>
    <property type="match status" value="1"/>
</dbReference>
<dbReference type="NCBIfam" id="NF001533">
    <property type="entry name" value="PRK00364.2-4"/>
    <property type="match status" value="1"/>
</dbReference>
<dbReference type="NCBIfam" id="NF001534">
    <property type="entry name" value="PRK00364.2-5"/>
    <property type="match status" value="1"/>
</dbReference>
<dbReference type="PANTHER" id="PTHR10772">
    <property type="entry name" value="10 KDA HEAT SHOCK PROTEIN"/>
    <property type="match status" value="1"/>
</dbReference>
<dbReference type="PANTHER" id="PTHR10772:SF58">
    <property type="entry name" value="CO-CHAPERONIN GROES"/>
    <property type="match status" value="1"/>
</dbReference>
<dbReference type="Pfam" id="PF00166">
    <property type="entry name" value="Cpn10"/>
    <property type="match status" value="1"/>
</dbReference>
<dbReference type="PRINTS" id="PR00297">
    <property type="entry name" value="CHAPERONIN10"/>
</dbReference>
<dbReference type="SMART" id="SM00883">
    <property type="entry name" value="Cpn10"/>
    <property type="match status" value="1"/>
</dbReference>
<dbReference type="SUPFAM" id="SSF50129">
    <property type="entry name" value="GroES-like"/>
    <property type="match status" value="1"/>
</dbReference>
<dbReference type="PROSITE" id="PS00681">
    <property type="entry name" value="CHAPERONINS_CPN10"/>
    <property type="match status" value="1"/>
</dbReference>
<sequence length="99" mass="10856">MANVNIKPLEDKILVQINEAETTTASGLVIPDSAKEKPQEATVIAVGPGRFDEKGERIPLDIKEDDVVIFSRYGGTEIKFDGVEYLLLSARDILAIVEK</sequence>
<name>CH10_COREF</name>